<keyword id="KW-0067">ATP-binding</keyword>
<keyword id="KW-0963">Cytoplasm</keyword>
<keyword id="KW-0347">Helicase</keyword>
<keyword id="KW-0378">Hydrolase</keyword>
<keyword id="KW-0507">mRNA processing</keyword>
<keyword id="KW-0508">mRNA splicing</keyword>
<keyword id="KW-0547">Nucleotide-binding</keyword>
<keyword id="KW-0539">Nucleus</keyword>
<keyword id="KW-1185">Reference proteome</keyword>
<feature type="chain" id="PRO_0000256017" description="Pre-mRNA-splicing ATP-dependent RNA helicase PRP28">
    <location>
        <begin position="1"/>
        <end position="705"/>
    </location>
</feature>
<feature type="domain" description="Helicase ATP-binding" evidence="2">
    <location>
        <begin position="300"/>
        <end position="503"/>
    </location>
</feature>
<feature type="domain" description="Helicase C-terminal" evidence="3">
    <location>
        <begin position="514"/>
        <end position="677"/>
    </location>
</feature>
<feature type="region of interest" description="Disordered" evidence="4">
    <location>
        <begin position="19"/>
        <end position="148"/>
    </location>
</feature>
<feature type="region of interest" description="Disordered" evidence="4">
    <location>
        <begin position="669"/>
        <end position="705"/>
    </location>
</feature>
<feature type="short sequence motif" description="Q motif">
    <location>
        <begin position="269"/>
        <end position="297"/>
    </location>
</feature>
<feature type="short sequence motif" description="DEAD box">
    <location>
        <begin position="426"/>
        <end position="429"/>
    </location>
</feature>
<feature type="compositionally biased region" description="Basic and acidic residues" evidence="4">
    <location>
        <begin position="31"/>
        <end position="56"/>
    </location>
</feature>
<feature type="compositionally biased region" description="Low complexity" evidence="4">
    <location>
        <begin position="63"/>
        <end position="83"/>
    </location>
</feature>
<feature type="compositionally biased region" description="Basic and acidic residues" evidence="4">
    <location>
        <begin position="93"/>
        <end position="129"/>
    </location>
</feature>
<feature type="compositionally biased region" description="Basic and acidic residues" evidence="4">
    <location>
        <begin position="669"/>
        <end position="679"/>
    </location>
</feature>
<feature type="compositionally biased region" description="Gly residues" evidence="4">
    <location>
        <begin position="696"/>
        <end position="705"/>
    </location>
</feature>
<feature type="binding site" evidence="2">
    <location>
        <begin position="313"/>
        <end position="320"/>
    </location>
    <ligand>
        <name>ATP</name>
        <dbReference type="ChEBI" id="CHEBI:30616"/>
    </ligand>
</feature>
<organism>
    <name type="scientific">Chaetomium globosum (strain ATCC 6205 / CBS 148.51 / DSM 1962 / NBRC 6347 / NRRL 1970)</name>
    <name type="common">Soil fungus</name>
    <dbReference type="NCBI Taxonomy" id="306901"/>
    <lineage>
        <taxon>Eukaryota</taxon>
        <taxon>Fungi</taxon>
        <taxon>Dikarya</taxon>
        <taxon>Ascomycota</taxon>
        <taxon>Pezizomycotina</taxon>
        <taxon>Sordariomycetes</taxon>
        <taxon>Sordariomycetidae</taxon>
        <taxon>Sordariales</taxon>
        <taxon>Chaetomiaceae</taxon>
        <taxon>Chaetomium</taxon>
    </lineage>
</organism>
<evidence type="ECO:0000250" key="1"/>
<evidence type="ECO:0000255" key="2">
    <source>
        <dbReference type="PROSITE-ProRule" id="PRU00541"/>
    </source>
</evidence>
<evidence type="ECO:0000255" key="3">
    <source>
        <dbReference type="PROSITE-ProRule" id="PRU00542"/>
    </source>
</evidence>
<evidence type="ECO:0000256" key="4">
    <source>
        <dbReference type="SAM" id="MobiDB-lite"/>
    </source>
</evidence>
<evidence type="ECO:0000305" key="5"/>
<comment type="function">
    <text evidence="1">ATP-dependent RNA helicase involved in mRNA splicing. May destabilize the U1/5'-splice site duplex to permit an effective competition for the 5'-splice site by the U6 snRNA, resulting in the switch between U1 and U6 at the 5'-splice site. May also act to unwind the U4/U6 base-pairing interaction in the U4/U6/U5 snRNP, facilitating the first covalent step of splicing (By similarity).</text>
</comment>
<comment type="catalytic activity">
    <reaction>
        <text>ATP + H2O = ADP + phosphate + H(+)</text>
        <dbReference type="Rhea" id="RHEA:13065"/>
        <dbReference type="ChEBI" id="CHEBI:15377"/>
        <dbReference type="ChEBI" id="CHEBI:15378"/>
        <dbReference type="ChEBI" id="CHEBI:30616"/>
        <dbReference type="ChEBI" id="CHEBI:43474"/>
        <dbReference type="ChEBI" id="CHEBI:456216"/>
        <dbReference type="EC" id="3.6.4.13"/>
    </reaction>
</comment>
<comment type="subunit">
    <text evidence="1">Component of the U5 snRNP complex.</text>
</comment>
<comment type="subcellular location">
    <subcellularLocation>
        <location evidence="1">Cytoplasm</location>
    </subcellularLocation>
    <subcellularLocation>
        <location evidence="1">Nucleus</location>
    </subcellularLocation>
</comment>
<comment type="domain">
    <text>The Q motif is unique to and characteristic of the DEAD box family of RNA helicases and controls ATP binding and hydrolysis.</text>
</comment>
<comment type="similarity">
    <text evidence="5">Belongs to the DEAD box helicase family. DDX23/PRP28 subfamily.</text>
</comment>
<sequence length="705" mass="78791">MDRRRLPPDLPALLRQREAERAAAAKPRFIPKKERERMAAEKAAKEEEERKRREEALIAQRHSSANGTNGSNGYSSGKSTTNSIPTGPKAMRHPGDSGEPEHGGKRRRLNDNDEKRAEMERKDAAELRAKYMGPEVNQSTFSAKKKRKRTAANKFNFDWDPEDDTSRPFDPVYAERPESLVRLAGYENTDELVLRKAEAIRRGDPETGEERARKLLEQHERVKQAAERKNFGKHWSEKKLEDMKERDWRIFKENFGIATKGGAIPNPMRSWAESNLPRRLLEIVENVGYDEPTPIQRAAIPIAQQARDLIGVAVTGSGKTAAFLLPLLVYISELPPLTEFNKNDGPYALILAPTRELVQQIETEARKFAGPLGFTVVSIVGGHSLEEQAFALRNGAEIIVATPGRLVDCLERRLLVFSQCCYIIMDEADRMIDQGFEEPLTKILDALPVANEKPDTEDAENSQLMSRYLGGKDRYRQTMMYTATMPPLVEKIAKKYLRRPAIVTIGNAGEAVDTVEQRVEFVSGEDKRKRRLQEILNSGQFKPPVIVFVNIKRNCEMVAKDIKSWGYSTVTLHGSKTQEQREASLASVRNGQANILVATDLAGRGIDVADVSLVVNFNMPSSIEAYTHRIGRTGRAGKSGVAITFLGNEDSDVMYDLKQIISKSSISKVPEELRRHEAAQSKPTRGGGKKLDDSGGFAGKGGSWQ</sequence>
<accession>Q2HEB0</accession>
<protein>
    <recommendedName>
        <fullName>Pre-mRNA-splicing ATP-dependent RNA helicase PRP28</fullName>
        <ecNumber>3.6.4.13</ecNumber>
    </recommendedName>
</protein>
<name>PRP28_CHAGB</name>
<gene>
    <name type="primary">PRP28</name>
    <name type="ORF">CHGG_01444</name>
</gene>
<dbReference type="EC" id="3.6.4.13"/>
<dbReference type="EMBL" id="CH408029">
    <property type="protein sequence ID" value="EAQ93209.1"/>
    <property type="molecule type" value="Genomic_DNA"/>
</dbReference>
<dbReference type="RefSeq" id="XP_001220665.1">
    <property type="nucleotide sequence ID" value="XM_001220664.1"/>
</dbReference>
<dbReference type="SMR" id="Q2HEB0"/>
<dbReference type="FunCoup" id="Q2HEB0">
    <property type="interactions" value="803"/>
</dbReference>
<dbReference type="STRING" id="306901.Q2HEB0"/>
<dbReference type="GeneID" id="4387031"/>
<dbReference type="VEuPathDB" id="FungiDB:CHGG_01444"/>
<dbReference type="eggNOG" id="KOG0333">
    <property type="taxonomic scope" value="Eukaryota"/>
</dbReference>
<dbReference type="HOGENOM" id="CLU_003041_11_3_1"/>
<dbReference type="InParanoid" id="Q2HEB0"/>
<dbReference type="OMA" id="ARDIKHM"/>
<dbReference type="OrthoDB" id="196131at2759"/>
<dbReference type="Proteomes" id="UP000001056">
    <property type="component" value="Unassembled WGS sequence"/>
</dbReference>
<dbReference type="GO" id="GO:0005737">
    <property type="term" value="C:cytoplasm"/>
    <property type="evidence" value="ECO:0007669"/>
    <property type="project" value="UniProtKB-SubCell"/>
</dbReference>
<dbReference type="GO" id="GO:0005682">
    <property type="term" value="C:U5 snRNP"/>
    <property type="evidence" value="ECO:0007669"/>
    <property type="project" value="EnsemblFungi"/>
</dbReference>
<dbReference type="GO" id="GO:0005524">
    <property type="term" value="F:ATP binding"/>
    <property type="evidence" value="ECO:0007669"/>
    <property type="project" value="UniProtKB-KW"/>
</dbReference>
<dbReference type="GO" id="GO:0016887">
    <property type="term" value="F:ATP hydrolysis activity"/>
    <property type="evidence" value="ECO:0007669"/>
    <property type="project" value="RHEA"/>
</dbReference>
<dbReference type="GO" id="GO:0000384">
    <property type="term" value="F:first spliceosomal transesterification activity"/>
    <property type="evidence" value="ECO:0007669"/>
    <property type="project" value="EnsemblFungi"/>
</dbReference>
<dbReference type="GO" id="GO:0003723">
    <property type="term" value="F:RNA binding"/>
    <property type="evidence" value="ECO:0007669"/>
    <property type="project" value="EnsemblFungi"/>
</dbReference>
<dbReference type="GO" id="GO:0003724">
    <property type="term" value="F:RNA helicase activity"/>
    <property type="evidence" value="ECO:0007669"/>
    <property type="project" value="UniProtKB-EC"/>
</dbReference>
<dbReference type="GO" id="GO:0000395">
    <property type="term" value="P:mRNA 5'-splice site recognition"/>
    <property type="evidence" value="ECO:0007669"/>
    <property type="project" value="EnsemblFungi"/>
</dbReference>
<dbReference type="CDD" id="cd17945">
    <property type="entry name" value="DEADc_DDX23"/>
    <property type="match status" value="1"/>
</dbReference>
<dbReference type="CDD" id="cd18787">
    <property type="entry name" value="SF2_C_DEAD"/>
    <property type="match status" value="1"/>
</dbReference>
<dbReference type="FunFam" id="3.40.50.300:FF:000322">
    <property type="entry name" value="probable ATP-dependent RNA helicase DDX23"/>
    <property type="match status" value="1"/>
</dbReference>
<dbReference type="Gene3D" id="3.40.50.300">
    <property type="entry name" value="P-loop containing nucleotide triphosphate hydrolases"/>
    <property type="match status" value="2"/>
</dbReference>
<dbReference type="InterPro" id="IPR011545">
    <property type="entry name" value="DEAD/DEAH_box_helicase_dom"/>
</dbReference>
<dbReference type="InterPro" id="IPR014001">
    <property type="entry name" value="Helicase_ATP-bd"/>
</dbReference>
<dbReference type="InterPro" id="IPR001650">
    <property type="entry name" value="Helicase_C-like"/>
</dbReference>
<dbReference type="InterPro" id="IPR027417">
    <property type="entry name" value="P-loop_NTPase"/>
</dbReference>
<dbReference type="InterPro" id="IPR000629">
    <property type="entry name" value="RNA-helicase_DEAD-box_CS"/>
</dbReference>
<dbReference type="InterPro" id="IPR014014">
    <property type="entry name" value="RNA_helicase_DEAD_Q_motif"/>
</dbReference>
<dbReference type="PANTHER" id="PTHR47958">
    <property type="entry name" value="ATP-DEPENDENT RNA HELICASE DBP3"/>
    <property type="match status" value="1"/>
</dbReference>
<dbReference type="Pfam" id="PF25430">
    <property type="entry name" value="DDX23"/>
    <property type="match status" value="1"/>
</dbReference>
<dbReference type="Pfam" id="PF00270">
    <property type="entry name" value="DEAD"/>
    <property type="match status" value="1"/>
</dbReference>
<dbReference type="Pfam" id="PF00271">
    <property type="entry name" value="Helicase_C"/>
    <property type="match status" value="1"/>
</dbReference>
<dbReference type="SMART" id="SM00487">
    <property type="entry name" value="DEXDc"/>
    <property type="match status" value="1"/>
</dbReference>
<dbReference type="SMART" id="SM00490">
    <property type="entry name" value="HELICc"/>
    <property type="match status" value="1"/>
</dbReference>
<dbReference type="SUPFAM" id="SSF52540">
    <property type="entry name" value="P-loop containing nucleoside triphosphate hydrolases"/>
    <property type="match status" value="1"/>
</dbReference>
<dbReference type="PROSITE" id="PS00039">
    <property type="entry name" value="DEAD_ATP_HELICASE"/>
    <property type="match status" value="1"/>
</dbReference>
<dbReference type="PROSITE" id="PS51192">
    <property type="entry name" value="HELICASE_ATP_BIND_1"/>
    <property type="match status" value="1"/>
</dbReference>
<dbReference type="PROSITE" id="PS51194">
    <property type="entry name" value="HELICASE_CTER"/>
    <property type="match status" value="1"/>
</dbReference>
<dbReference type="PROSITE" id="PS51195">
    <property type="entry name" value="Q_MOTIF"/>
    <property type="match status" value="1"/>
</dbReference>
<proteinExistence type="inferred from homology"/>
<reference key="1">
    <citation type="journal article" date="2015" name="Genome Announc.">
        <title>Draft genome sequence of the cellulolytic fungus Chaetomium globosum.</title>
        <authorList>
            <person name="Cuomo C.A."/>
            <person name="Untereiner W.A."/>
            <person name="Ma L.-J."/>
            <person name="Grabherr M."/>
            <person name="Birren B.W."/>
        </authorList>
    </citation>
    <scope>NUCLEOTIDE SEQUENCE [LARGE SCALE GENOMIC DNA]</scope>
    <source>
        <strain>ATCC 6205 / CBS 148.51 / DSM 1962 / NBRC 6347 / NRRL 1970</strain>
    </source>
</reference>